<organism>
    <name type="scientific">Burkholderia mallei (strain ATCC 23344)</name>
    <dbReference type="NCBI Taxonomy" id="243160"/>
    <lineage>
        <taxon>Bacteria</taxon>
        <taxon>Pseudomonadati</taxon>
        <taxon>Pseudomonadota</taxon>
        <taxon>Betaproteobacteria</taxon>
        <taxon>Burkholderiales</taxon>
        <taxon>Burkholderiaceae</taxon>
        <taxon>Burkholderia</taxon>
        <taxon>pseudomallei group</taxon>
    </lineage>
</organism>
<reference key="1">
    <citation type="journal article" date="2004" name="Proc. Natl. Acad. Sci. U.S.A.">
        <title>Structural flexibility in the Burkholderia mallei genome.</title>
        <authorList>
            <person name="Nierman W.C."/>
            <person name="DeShazer D."/>
            <person name="Kim H.S."/>
            <person name="Tettelin H."/>
            <person name="Nelson K.E."/>
            <person name="Feldblyum T.V."/>
            <person name="Ulrich R.L."/>
            <person name="Ronning C.M."/>
            <person name="Brinkac L.M."/>
            <person name="Daugherty S.C."/>
            <person name="Davidsen T.D."/>
            <person name="DeBoy R.T."/>
            <person name="Dimitrov G."/>
            <person name="Dodson R.J."/>
            <person name="Durkin A.S."/>
            <person name="Gwinn M.L."/>
            <person name="Haft D.H."/>
            <person name="Khouri H.M."/>
            <person name="Kolonay J.F."/>
            <person name="Madupu R."/>
            <person name="Mohammoud Y."/>
            <person name="Nelson W.C."/>
            <person name="Radune D."/>
            <person name="Romero C.M."/>
            <person name="Sarria S."/>
            <person name="Selengut J."/>
            <person name="Shamblin C."/>
            <person name="Sullivan S.A."/>
            <person name="White O."/>
            <person name="Yu Y."/>
            <person name="Zafar N."/>
            <person name="Zhou L."/>
            <person name="Fraser C.M."/>
        </authorList>
    </citation>
    <scope>NUCLEOTIDE SEQUENCE [LARGE SCALE GENOMIC DNA]</scope>
    <source>
        <strain>ATCC 23344</strain>
    </source>
</reference>
<keyword id="KW-0028">Amino-acid biosynthesis</keyword>
<keyword id="KW-0368">Histidine biosynthesis</keyword>
<keyword id="KW-0378">Hydrolase</keyword>
<keyword id="KW-0486">Methionine biosynthesis</keyword>
<keyword id="KW-0511">Multifunctional enzyme</keyword>
<keyword id="KW-0521">NADP</keyword>
<keyword id="KW-0554">One-carbon metabolism</keyword>
<keyword id="KW-0560">Oxidoreductase</keyword>
<keyword id="KW-0658">Purine biosynthesis</keyword>
<keyword id="KW-1185">Reference proteome</keyword>
<gene>
    <name evidence="1" type="primary">folD</name>
    <name type="ordered locus">BMA1724</name>
</gene>
<proteinExistence type="inferred from homology"/>
<name>FOLD_BURMA</name>
<feature type="chain" id="PRO_0000268298" description="Bifunctional protein FolD">
    <location>
        <begin position="1"/>
        <end position="285"/>
    </location>
</feature>
<feature type="binding site" evidence="1">
    <location>
        <begin position="165"/>
        <end position="167"/>
    </location>
    <ligand>
        <name>NADP(+)</name>
        <dbReference type="ChEBI" id="CHEBI:58349"/>
    </ligand>
</feature>
<feature type="binding site" evidence="1">
    <location>
        <position position="190"/>
    </location>
    <ligand>
        <name>NADP(+)</name>
        <dbReference type="ChEBI" id="CHEBI:58349"/>
    </ligand>
</feature>
<protein>
    <recommendedName>
        <fullName evidence="1">Bifunctional protein FolD</fullName>
    </recommendedName>
    <domain>
        <recommendedName>
            <fullName evidence="1">Methylenetetrahydrofolate dehydrogenase</fullName>
            <ecNumber evidence="1">1.5.1.5</ecNumber>
        </recommendedName>
    </domain>
    <domain>
        <recommendedName>
            <fullName evidence="1">Methenyltetrahydrofolate cyclohydrolase</fullName>
            <ecNumber evidence="1">3.5.4.9</ecNumber>
        </recommendedName>
    </domain>
</protein>
<evidence type="ECO:0000255" key="1">
    <source>
        <dbReference type="HAMAP-Rule" id="MF_01576"/>
    </source>
</evidence>
<comment type="function">
    <text evidence="1">Catalyzes the oxidation of 5,10-methylenetetrahydrofolate to 5,10-methenyltetrahydrofolate and then the hydrolysis of 5,10-methenyltetrahydrofolate to 10-formyltetrahydrofolate.</text>
</comment>
<comment type="catalytic activity">
    <reaction evidence="1">
        <text>(6R)-5,10-methylene-5,6,7,8-tetrahydrofolate + NADP(+) = (6R)-5,10-methenyltetrahydrofolate + NADPH</text>
        <dbReference type="Rhea" id="RHEA:22812"/>
        <dbReference type="ChEBI" id="CHEBI:15636"/>
        <dbReference type="ChEBI" id="CHEBI:57455"/>
        <dbReference type="ChEBI" id="CHEBI:57783"/>
        <dbReference type="ChEBI" id="CHEBI:58349"/>
        <dbReference type="EC" id="1.5.1.5"/>
    </reaction>
</comment>
<comment type="catalytic activity">
    <reaction evidence="1">
        <text>(6R)-5,10-methenyltetrahydrofolate + H2O = (6R)-10-formyltetrahydrofolate + H(+)</text>
        <dbReference type="Rhea" id="RHEA:23700"/>
        <dbReference type="ChEBI" id="CHEBI:15377"/>
        <dbReference type="ChEBI" id="CHEBI:15378"/>
        <dbReference type="ChEBI" id="CHEBI:57455"/>
        <dbReference type="ChEBI" id="CHEBI:195366"/>
        <dbReference type="EC" id="3.5.4.9"/>
    </reaction>
</comment>
<comment type="pathway">
    <text evidence="1">One-carbon metabolism; tetrahydrofolate interconversion.</text>
</comment>
<comment type="subunit">
    <text evidence="1">Homodimer.</text>
</comment>
<comment type="similarity">
    <text evidence="1">Belongs to the tetrahydrofolate dehydrogenase/cyclohydrolase family.</text>
</comment>
<dbReference type="EC" id="1.5.1.5" evidence="1"/>
<dbReference type="EC" id="3.5.4.9" evidence="1"/>
<dbReference type="EMBL" id="CP000010">
    <property type="protein sequence ID" value="AAU48176.1"/>
    <property type="molecule type" value="Genomic_DNA"/>
</dbReference>
<dbReference type="RefSeq" id="WP_004192825.1">
    <property type="nucleotide sequence ID" value="NC_006348.1"/>
</dbReference>
<dbReference type="RefSeq" id="YP_103344.1">
    <property type="nucleotide sequence ID" value="NC_006348.1"/>
</dbReference>
<dbReference type="SMR" id="Q62IX5"/>
<dbReference type="GeneID" id="92979446"/>
<dbReference type="KEGG" id="bma:BMA1724"/>
<dbReference type="PATRIC" id="fig|243160.12.peg.1767"/>
<dbReference type="eggNOG" id="COG0190">
    <property type="taxonomic scope" value="Bacteria"/>
</dbReference>
<dbReference type="HOGENOM" id="CLU_034045_2_1_4"/>
<dbReference type="UniPathway" id="UPA00193"/>
<dbReference type="Proteomes" id="UP000006693">
    <property type="component" value="Chromosome 1"/>
</dbReference>
<dbReference type="GO" id="GO:0005829">
    <property type="term" value="C:cytosol"/>
    <property type="evidence" value="ECO:0007669"/>
    <property type="project" value="TreeGrafter"/>
</dbReference>
<dbReference type="GO" id="GO:0004477">
    <property type="term" value="F:methenyltetrahydrofolate cyclohydrolase activity"/>
    <property type="evidence" value="ECO:0007669"/>
    <property type="project" value="UniProtKB-UniRule"/>
</dbReference>
<dbReference type="GO" id="GO:0004488">
    <property type="term" value="F:methylenetetrahydrofolate dehydrogenase (NADP+) activity"/>
    <property type="evidence" value="ECO:0007669"/>
    <property type="project" value="UniProtKB-UniRule"/>
</dbReference>
<dbReference type="GO" id="GO:0000105">
    <property type="term" value="P:L-histidine biosynthetic process"/>
    <property type="evidence" value="ECO:0007669"/>
    <property type="project" value="UniProtKB-KW"/>
</dbReference>
<dbReference type="GO" id="GO:0009086">
    <property type="term" value="P:methionine biosynthetic process"/>
    <property type="evidence" value="ECO:0007669"/>
    <property type="project" value="UniProtKB-KW"/>
</dbReference>
<dbReference type="GO" id="GO:0006164">
    <property type="term" value="P:purine nucleotide biosynthetic process"/>
    <property type="evidence" value="ECO:0007669"/>
    <property type="project" value="UniProtKB-KW"/>
</dbReference>
<dbReference type="GO" id="GO:0035999">
    <property type="term" value="P:tetrahydrofolate interconversion"/>
    <property type="evidence" value="ECO:0007669"/>
    <property type="project" value="UniProtKB-UniRule"/>
</dbReference>
<dbReference type="CDD" id="cd01080">
    <property type="entry name" value="NAD_bind_m-THF_DH_Cyclohyd"/>
    <property type="match status" value="1"/>
</dbReference>
<dbReference type="FunFam" id="3.40.50.720:FF:000094">
    <property type="entry name" value="Bifunctional protein FolD"/>
    <property type="match status" value="1"/>
</dbReference>
<dbReference type="FunFam" id="3.40.50.10860:FF:000005">
    <property type="entry name" value="C-1-tetrahydrofolate synthase, cytoplasmic, putative"/>
    <property type="match status" value="1"/>
</dbReference>
<dbReference type="Gene3D" id="3.40.50.10860">
    <property type="entry name" value="Leucine Dehydrogenase, chain A, domain 1"/>
    <property type="match status" value="1"/>
</dbReference>
<dbReference type="Gene3D" id="3.40.50.720">
    <property type="entry name" value="NAD(P)-binding Rossmann-like Domain"/>
    <property type="match status" value="1"/>
</dbReference>
<dbReference type="HAMAP" id="MF_01576">
    <property type="entry name" value="THF_DHG_CYH"/>
    <property type="match status" value="1"/>
</dbReference>
<dbReference type="InterPro" id="IPR046346">
    <property type="entry name" value="Aminoacid_DH-like_N_sf"/>
</dbReference>
<dbReference type="InterPro" id="IPR036291">
    <property type="entry name" value="NAD(P)-bd_dom_sf"/>
</dbReference>
<dbReference type="InterPro" id="IPR000672">
    <property type="entry name" value="THF_DH/CycHdrlase"/>
</dbReference>
<dbReference type="InterPro" id="IPR020630">
    <property type="entry name" value="THF_DH/CycHdrlase_cat_dom"/>
</dbReference>
<dbReference type="InterPro" id="IPR020867">
    <property type="entry name" value="THF_DH/CycHdrlase_CS"/>
</dbReference>
<dbReference type="InterPro" id="IPR020631">
    <property type="entry name" value="THF_DH/CycHdrlase_NAD-bd_dom"/>
</dbReference>
<dbReference type="NCBIfam" id="NF008058">
    <property type="entry name" value="PRK10792.1"/>
    <property type="match status" value="1"/>
</dbReference>
<dbReference type="NCBIfam" id="NF010783">
    <property type="entry name" value="PRK14186.1"/>
    <property type="match status" value="1"/>
</dbReference>
<dbReference type="NCBIfam" id="NF010786">
    <property type="entry name" value="PRK14189.1"/>
    <property type="match status" value="1"/>
</dbReference>
<dbReference type="PANTHER" id="PTHR48099:SF5">
    <property type="entry name" value="C-1-TETRAHYDROFOLATE SYNTHASE, CYTOPLASMIC"/>
    <property type="match status" value="1"/>
</dbReference>
<dbReference type="PANTHER" id="PTHR48099">
    <property type="entry name" value="C-1-TETRAHYDROFOLATE SYNTHASE, CYTOPLASMIC-RELATED"/>
    <property type="match status" value="1"/>
</dbReference>
<dbReference type="Pfam" id="PF00763">
    <property type="entry name" value="THF_DHG_CYH"/>
    <property type="match status" value="1"/>
</dbReference>
<dbReference type="Pfam" id="PF02882">
    <property type="entry name" value="THF_DHG_CYH_C"/>
    <property type="match status" value="1"/>
</dbReference>
<dbReference type="PRINTS" id="PR00085">
    <property type="entry name" value="THFDHDRGNASE"/>
</dbReference>
<dbReference type="SUPFAM" id="SSF53223">
    <property type="entry name" value="Aminoacid dehydrogenase-like, N-terminal domain"/>
    <property type="match status" value="1"/>
</dbReference>
<dbReference type="SUPFAM" id="SSF51735">
    <property type="entry name" value="NAD(P)-binding Rossmann-fold domains"/>
    <property type="match status" value="1"/>
</dbReference>
<dbReference type="PROSITE" id="PS00766">
    <property type="entry name" value="THF_DHG_CYH_1"/>
    <property type="match status" value="1"/>
</dbReference>
<dbReference type="PROSITE" id="PS00767">
    <property type="entry name" value="THF_DHG_CYH_2"/>
    <property type="match status" value="1"/>
</dbReference>
<sequence>MTATLIDGNALSKTLRAQAAERAAALAARGHRPGLAVILVGDNPASEVYVRNKIKACEDNGFFSLKDRYPATLSEPELLARIDELNRDPKIHGILVQLPLPAHIDSHKVIEAIAPEKDVDGFHVANAGALLTGKPLFRPCTPYGVMKMFEAYKIPLQGANAVVIGRSNIVGKPMALLLLEAGATVTICHSKTCELAAHTRAADIVVAAVGKRNVLTADMVKPGATVIDVGMNRNDEGKLCGDVDFAGVSQVAGHITPVPGGVGPMTITMLLVNTIEAAERAAAAA</sequence>
<accession>Q62IX5</accession>